<name>PYRI_THEON</name>
<keyword id="KW-0479">Metal-binding</keyword>
<keyword id="KW-0665">Pyrimidine biosynthesis</keyword>
<keyword id="KW-0862">Zinc</keyword>
<organism>
    <name type="scientific">Thermococcus onnurineus (strain NA1)</name>
    <dbReference type="NCBI Taxonomy" id="523850"/>
    <lineage>
        <taxon>Archaea</taxon>
        <taxon>Methanobacteriati</taxon>
        <taxon>Methanobacteriota</taxon>
        <taxon>Thermococci</taxon>
        <taxon>Thermococcales</taxon>
        <taxon>Thermococcaceae</taxon>
        <taxon>Thermococcus</taxon>
    </lineage>
</organism>
<dbReference type="EMBL" id="CP000855">
    <property type="protein sequence ID" value="ACJ16928.1"/>
    <property type="molecule type" value="Genomic_DNA"/>
</dbReference>
<dbReference type="RefSeq" id="WP_012572400.1">
    <property type="nucleotide sequence ID" value="NC_011529.1"/>
</dbReference>
<dbReference type="SMR" id="B6YXW5"/>
<dbReference type="STRING" id="523850.TON_1438"/>
<dbReference type="GeneID" id="7018472"/>
<dbReference type="KEGG" id="ton:TON_1438"/>
<dbReference type="PATRIC" id="fig|523850.10.peg.1449"/>
<dbReference type="eggNOG" id="arCOG04229">
    <property type="taxonomic scope" value="Archaea"/>
</dbReference>
<dbReference type="HOGENOM" id="CLU_128576_0_0_2"/>
<dbReference type="OrthoDB" id="7000at2157"/>
<dbReference type="Proteomes" id="UP000002727">
    <property type="component" value="Chromosome"/>
</dbReference>
<dbReference type="GO" id="GO:0009347">
    <property type="term" value="C:aspartate carbamoyltransferase complex"/>
    <property type="evidence" value="ECO:0007669"/>
    <property type="project" value="InterPro"/>
</dbReference>
<dbReference type="GO" id="GO:0046872">
    <property type="term" value="F:metal ion binding"/>
    <property type="evidence" value="ECO:0007669"/>
    <property type="project" value="UniProtKB-KW"/>
</dbReference>
<dbReference type="GO" id="GO:0006207">
    <property type="term" value="P:'de novo' pyrimidine nucleobase biosynthetic process"/>
    <property type="evidence" value="ECO:0007669"/>
    <property type="project" value="InterPro"/>
</dbReference>
<dbReference type="GO" id="GO:0006221">
    <property type="term" value="P:pyrimidine nucleotide biosynthetic process"/>
    <property type="evidence" value="ECO:0007669"/>
    <property type="project" value="UniProtKB-UniRule"/>
</dbReference>
<dbReference type="Gene3D" id="2.30.30.20">
    <property type="entry name" value="Aspartate carbamoyltransferase regulatory subunit, C-terminal domain"/>
    <property type="match status" value="1"/>
</dbReference>
<dbReference type="Gene3D" id="3.30.70.140">
    <property type="entry name" value="Aspartate carbamoyltransferase regulatory subunit, N-terminal domain"/>
    <property type="match status" value="1"/>
</dbReference>
<dbReference type="HAMAP" id="MF_00002">
    <property type="entry name" value="Asp_carb_tr_reg"/>
    <property type="match status" value="1"/>
</dbReference>
<dbReference type="InterPro" id="IPR020545">
    <property type="entry name" value="Asp_carbamoyltransf_reg_N"/>
</dbReference>
<dbReference type="InterPro" id="IPR002801">
    <property type="entry name" value="Asp_carbamoylTrfase_reg"/>
</dbReference>
<dbReference type="InterPro" id="IPR020542">
    <property type="entry name" value="Asp_carbamoyltrfase_reg_C"/>
</dbReference>
<dbReference type="InterPro" id="IPR036792">
    <property type="entry name" value="Asp_carbatrfase_reg_C_sf"/>
</dbReference>
<dbReference type="InterPro" id="IPR036793">
    <property type="entry name" value="Asp_carbatrfase_reg_N_sf"/>
</dbReference>
<dbReference type="NCBIfam" id="TIGR00240">
    <property type="entry name" value="ATCase_reg"/>
    <property type="match status" value="1"/>
</dbReference>
<dbReference type="PANTHER" id="PTHR35805">
    <property type="entry name" value="ASPARTATE CARBAMOYLTRANSFERASE REGULATORY CHAIN"/>
    <property type="match status" value="1"/>
</dbReference>
<dbReference type="PANTHER" id="PTHR35805:SF1">
    <property type="entry name" value="ASPARTATE CARBAMOYLTRANSFERASE REGULATORY CHAIN"/>
    <property type="match status" value="1"/>
</dbReference>
<dbReference type="Pfam" id="PF01948">
    <property type="entry name" value="PyrI"/>
    <property type="match status" value="1"/>
</dbReference>
<dbReference type="Pfam" id="PF02748">
    <property type="entry name" value="PyrI_C"/>
    <property type="match status" value="1"/>
</dbReference>
<dbReference type="SUPFAM" id="SSF57825">
    <property type="entry name" value="Aspartate carbamoyltransferase, Regulatory-chain, C-terminal domain"/>
    <property type="match status" value="1"/>
</dbReference>
<dbReference type="SUPFAM" id="SSF54893">
    <property type="entry name" value="Aspartate carbamoyltransferase, Regulatory-chain, N-terminal domain"/>
    <property type="match status" value="1"/>
</dbReference>
<gene>
    <name evidence="1" type="primary">pyrI</name>
    <name type="ordered locus">TON_1438</name>
</gene>
<protein>
    <recommendedName>
        <fullName evidence="1">Aspartate carbamoyltransferase regulatory chain</fullName>
    </recommendedName>
</protein>
<comment type="function">
    <text evidence="1">Involved in allosteric regulation of aspartate carbamoyltransferase.</text>
</comment>
<comment type="cofactor">
    <cofactor evidence="1">
        <name>Zn(2+)</name>
        <dbReference type="ChEBI" id="CHEBI:29105"/>
    </cofactor>
    <text evidence="1">Binds 1 zinc ion per subunit.</text>
</comment>
<comment type="subunit">
    <text evidence="1">Contains catalytic and regulatory chains.</text>
</comment>
<comment type="similarity">
    <text evidence="1">Belongs to the PyrI family.</text>
</comment>
<evidence type="ECO:0000255" key="1">
    <source>
        <dbReference type="HAMAP-Rule" id="MF_00002"/>
    </source>
</evidence>
<reference key="1">
    <citation type="journal article" date="2008" name="J. Bacteriol.">
        <title>The complete genome sequence of Thermococcus onnurineus NA1 reveals a mixed heterotrophic and carboxydotrophic metabolism.</title>
        <authorList>
            <person name="Lee H.S."/>
            <person name="Kang S.G."/>
            <person name="Bae S.S."/>
            <person name="Lim J.K."/>
            <person name="Cho Y."/>
            <person name="Kim Y.J."/>
            <person name="Jeon J.H."/>
            <person name="Cha S.-S."/>
            <person name="Kwon K.K."/>
            <person name="Kim H.-T."/>
            <person name="Park C.-J."/>
            <person name="Lee H.-W."/>
            <person name="Kim S.I."/>
            <person name="Chun J."/>
            <person name="Colwell R.R."/>
            <person name="Kim S.-J."/>
            <person name="Lee J.-H."/>
        </authorList>
    </citation>
    <scope>NUCLEOTIDE SEQUENCE [LARGE SCALE GENOMIC DNA]</scope>
    <source>
        <strain>NA1</strain>
    </source>
</reference>
<accession>B6YXW5</accession>
<feature type="chain" id="PRO_1000088843" description="Aspartate carbamoyltransferase regulatory chain">
    <location>
        <begin position="1"/>
        <end position="151"/>
    </location>
</feature>
<feature type="binding site" evidence="1">
    <location>
        <position position="107"/>
    </location>
    <ligand>
        <name>Zn(2+)</name>
        <dbReference type="ChEBI" id="CHEBI:29105"/>
    </ligand>
</feature>
<feature type="binding site" evidence="1">
    <location>
        <position position="112"/>
    </location>
    <ligand>
        <name>Zn(2+)</name>
        <dbReference type="ChEBI" id="CHEBI:29105"/>
    </ligand>
</feature>
<feature type="binding site" evidence="1">
    <location>
        <position position="135"/>
    </location>
    <ligand>
        <name>Zn(2+)</name>
        <dbReference type="ChEBI" id="CHEBI:29105"/>
    </ligand>
</feature>
<feature type="binding site" evidence="1">
    <location>
        <position position="138"/>
    </location>
    <ligand>
        <name>Zn(2+)</name>
        <dbReference type="ChEBI" id="CHEBI:29105"/>
    </ligand>
</feature>
<sequence length="151" mass="16754">MAELKVTAIKEGTVIDHIPAGKGLKVIEILHLSRPNGGVLLLASNVHSKKLGKKDIVKIEGKFLSEEEVNKISLIAPTATVNIVRDYGVAEKFNVEIPDEIVGILRCANPNCVSNHEYVTSKFYVVSREPLKVRCHYCERTMEESEILSNL</sequence>
<proteinExistence type="inferred from homology"/>